<feature type="chain" id="PRO_0000257416" description="tRNA (guanine-N(1)-)-methyltransferase">
    <location>
        <begin position="1"/>
        <end position="235"/>
    </location>
</feature>
<feature type="binding site" evidence="1">
    <location>
        <position position="114"/>
    </location>
    <ligand>
        <name>S-adenosyl-L-methionine</name>
        <dbReference type="ChEBI" id="CHEBI:59789"/>
    </ligand>
</feature>
<feature type="binding site" evidence="1">
    <location>
        <begin position="134"/>
        <end position="139"/>
    </location>
    <ligand>
        <name>S-adenosyl-L-methionine</name>
        <dbReference type="ChEBI" id="CHEBI:59789"/>
    </ligand>
</feature>
<organism>
    <name type="scientific">Ehrlichia canis (strain Jake)</name>
    <dbReference type="NCBI Taxonomy" id="269484"/>
    <lineage>
        <taxon>Bacteria</taxon>
        <taxon>Pseudomonadati</taxon>
        <taxon>Pseudomonadota</taxon>
        <taxon>Alphaproteobacteria</taxon>
        <taxon>Rickettsiales</taxon>
        <taxon>Anaplasmataceae</taxon>
        <taxon>Ehrlichia</taxon>
    </lineage>
</organism>
<name>TRMD_EHRCJ</name>
<sequence>MTLNVNVLTIFPEMFPGPLSYSVIGRALNKGIWNLNVIDIRSFAKDKHKTVDDKPYGGGPGMIMKADVIGSAIDEVLSKNKNTKLIYMSPSGVKLNQDISGQLTHFSNITVLCGRFEGIDKRILDFYDFHEISIGDYILSGGEVACMVLIEACVRLIPGVVNNTQSICDESFTLNNQLEYPQYTRPAKWRGLEVPDILLSGNHKKINLWKANQSYCITKQRRPELTDTINGDIYE</sequence>
<evidence type="ECO:0000255" key="1">
    <source>
        <dbReference type="HAMAP-Rule" id="MF_00605"/>
    </source>
</evidence>
<keyword id="KW-0963">Cytoplasm</keyword>
<keyword id="KW-0489">Methyltransferase</keyword>
<keyword id="KW-0949">S-adenosyl-L-methionine</keyword>
<keyword id="KW-0808">Transferase</keyword>
<keyword id="KW-0819">tRNA processing</keyword>
<accession>Q3YQP3</accession>
<protein>
    <recommendedName>
        <fullName evidence="1">tRNA (guanine-N(1)-)-methyltransferase</fullName>
        <ecNumber evidence="1">2.1.1.228</ecNumber>
    </recommendedName>
    <alternativeName>
        <fullName evidence="1">M1G-methyltransferase</fullName>
    </alternativeName>
    <alternativeName>
        <fullName evidence="1">tRNA [GM37] methyltransferase</fullName>
    </alternativeName>
</protein>
<reference key="1">
    <citation type="journal article" date="2006" name="J. Bacteriol.">
        <title>The genome of the obligately intracellular bacterium Ehrlichia canis reveals themes of complex membrane structure and immune evasion strategies.</title>
        <authorList>
            <person name="Mavromatis K."/>
            <person name="Doyle C.K."/>
            <person name="Lykidis A."/>
            <person name="Ivanova N."/>
            <person name="Francino M.P."/>
            <person name="Chain P."/>
            <person name="Shin M."/>
            <person name="Malfatti S."/>
            <person name="Larimer F."/>
            <person name="Copeland A."/>
            <person name="Detter J.C."/>
            <person name="Land M."/>
            <person name="Richardson P.M."/>
            <person name="Yu X.J."/>
            <person name="Walker D.H."/>
            <person name="McBride J.W."/>
            <person name="Kyrpides N.C."/>
        </authorList>
    </citation>
    <scope>NUCLEOTIDE SEQUENCE [LARGE SCALE GENOMIC DNA]</scope>
    <source>
        <strain>Jake</strain>
    </source>
</reference>
<gene>
    <name evidence="1" type="primary">trmD</name>
    <name type="ordered locus">Ecaj_0931</name>
</gene>
<dbReference type="EC" id="2.1.1.228" evidence="1"/>
<dbReference type="EMBL" id="CP000107">
    <property type="protein sequence ID" value="AAZ68962.1"/>
    <property type="molecule type" value="Genomic_DNA"/>
</dbReference>
<dbReference type="RefSeq" id="WP_011305035.1">
    <property type="nucleotide sequence ID" value="NC_007354.1"/>
</dbReference>
<dbReference type="SMR" id="Q3YQP3"/>
<dbReference type="FunCoup" id="Q3YQP3">
    <property type="interactions" value="280"/>
</dbReference>
<dbReference type="STRING" id="269484.Ecaj_0931"/>
<dbReference type="KEGG" id="ecn:Ecaj_0931"/>
<dbReference type="eggNOG" id="COG0336">
    <property type="taxonomic scope" value="Bacteria"/>
</dbReference>
<dbReference type="HOGENOM" id="CLU_047363_0_1_5"/>
<dbReference type="InParanoid" id="Q3YQP3"/>
<dbReference type="Proteomes" id="UP000000435">
    <property type="component" value="Chromosome"/>
</dbReference>
<dbReference type="GO" id="GO:0005829">
    <property type="term" value="C:cytosol"/>
    <property type="evidence" value="ECO:0007669"/>
    <property type="project" value="TreeGrafter"/>
</dbReference>
<dbReference type="GO" id="GO:0052906">
    <property type="term" value="F:tRNA (guanine(37)-N1)-methyltransferase activity"/>
    <property type="evidence" value="ECO:0007669"/>
    <property type="project" value="UniProtKB-UniRule"/>
</dbReference>
<dbReference type="GO" id="GO:0002939">
    <property type="term" value="P:tRNA N1-guanine methylation"/>
    <property type="evidence" value="ECO:0007669"/>
    <property type="project" value="TreeGrafter"/>
</dbReference>
<dbReference type="CDD" id="cd18080">
    <property type="entry name" value="TrmD-like"/>
    <property type="match status" value="1"/>
</dbReference>
<dbReference type="FunFam" id="3.40.1280.10:FF:000001">
    <property type="entry name" value="tRNA (guanine-N(1)-)-methyltransferase"/>
    <property type="match status" value="1"/>
</dbReference>
<dbReference type="Gene3D" id="3.40.1280.10">
    <property type="match status" value="1"/>
</dbReference>
<dbReference type="Gene3D" id="1.10.1270.20">
    <property type="entry name" value="tRNA(m1g37)methyltransferase, domain 2"/>
    <property type="match status" value="1"/>
</dbReference>
<dbReference type="HAMAP" id="MF_00605">
    <property type="entry name" value="TrmD"/>
    <property type="match status" value="1"/>
</dbReference>
<dbReference type="InterPro" id="IPR029028">
    <property type="entry name" value="Alpha/beta_knot_MTases"/>
</dbReference>
<dbReference type="InterPro" id="IPR023148">
    <property type="entry name" value="tRNA_m1G_MeTrfase_C_sf"/>
</dbReference>
<dbReference type="InterPro" id="IPR002649">
    <property type="entry name" value="tRNA_m1G_MeTrfase_TrmD"/>
</dbReference>
<dbReference type="InterPro" id="IPR029026">
    <property type="entry name" value="tRNA_m1G_MTases_N"/>
</dbReference>
<dbReference type="InterPro" id="IPR016009">
    <property type="entry name" value="tRNA_MeTrfase_TRMD/TRM10"/>
</dbReference>
<dbReference type="NCBIfam" id="NF000648">
    <property type="entry name" value="PRK00026.1"/>
    <property type="match status" value="1"/>
</dbReference>
<dbReference type="NCBIfam" id="TIGR00088">
    <property type="entry name" value="trmD"/>
    <property type="match status" value="1"/>
</dbReference>
<dbReference type="PANTHER" id="PTHR46417">
    <property type="entry name" value="TRNA (GUANINE-N(1)-)-METHYLTRANSFERASE"/>
    <property type="match status" value="1"/>
</dbReference>
<dbReference type="PANTHER" id="PTHR46417:SF1">
    <property type="entry name" value="TRNA (GUANINE-N(1)-)-METHYLTRANSFERASE"/>
    <property type="match status" value="1"/>
</dbReference>
<dbReference type="Pfam" id="PF01746">
    <property type="entry name" value="tRNA_m1G_MT"/>
    <property type="match status" value="1"/>
</dbReference>
<dbReference type="PIRSF" id="PIRSF000386">
    <property type="entry name" value="tRNA_mtase"/>
    <property type="match status" value="1"/>
</dbReference>
<dbReference type="SUPFAM" id="SSF75217">
    <property type="entry name" value="alpha/beta knot"/>
    <property type="match status" value="1"/>
</dbReference>
<proteinExistence type="inferred from homology"/>
<comment type="function">
    <text evidence="1">Specifically methylates guanosine-37 in various tRNAs.</text>
</comment>
<comment type="catalytic activity">
    <reaction evidence="1">
        <text>guanosine(37) in tRNA + S-adenosyl-L-methionine = N(1)-methylguanosine(37) in tRNA + S-adenosyl-L-homocysteine + H(+)</text>
        <dbReference type="Rhea" id="RHEA:36899"/>
        <dbReference type="Rhea" id="RHEA-COMP:10145"/>
        <dbReference type="Rhea" id="RHEA-COMP:10147"/>
        <dbReference type="ChEBI" id="CHEBI:15378"/>
        <dbReference type="ChEBI" id="CHEBI:57856"/>
        <dbReference type="ChEBI" id="CHEBI:59789"/>
        <dbReference type="ChEBI" id="CHEBI:73542"/>
        <dbReference type="ChEBI" id="CHEBI:74269"/>
        <dbReference type="EC" id="2.1.1.228"/>
    </reaction>
</comment>
<comment type="subunit">
    <text evidence="1">Homodimer.</text>
</comment>
<comment type="subcellular location">
    <subcellularLocation>
        <location evidence="1">Cytoplasm</location>
    </subcellularLocation>
</comment>
<comment type="similarity">
    <text evidence="1">Belongs to the RNA methyltransferase TrmD family.</text>
</comment>